<sequence>MNKFISIIALCVFSSYANAAFTLNSTRYIYNEGQQSVSVNIHNESEHKYGGQVWIDNIDKNGEVVFFSPSPMVFKLNPKQKQIVRIVNINDNLPKDRESIFWLNVQEIPPAPKGDGGSLSLAINNRVKLIYRPIALKNGRDEAENNIKLINSGTDSCLENTTPYYFAISDVKINGKSIDLNSDAKNKMGVFSPFSKVCLGNVNTSGNITVTAFNDYGVATSYTVQRSK</sequence>
<comment type="function">
    <text>Mediates assembly of pili by forming soluble multimeric complexes with pili subunits as an intermediate step in the assembly process. This protein is involved in K99 pili assembly.</text>
</comment>
<comment type="subcellular location">
    <subcellularLocation>
        <location>Periplasm</location>
    </subcellularLocation>
</comment>
<comment type="similarity">
    <text evidence="2">Belongs to the periplasmic pilus chaperone family.</text>
</comment>
<evidence type="ECO:0000255" key="1"/>
<evidence type="ECO:0000305" key="2"/>
<protein>
    <recommendedName>
        <fullName>Chaperone protein FanE</fullName>
    </recommendedName>
</protein>
<organism>
    <name type="scientific">Escherichia coli</name>
    <dbReference type="NCBI Taxonomy" id="562"/>
    <lineage>
        <taxon>Bacteria</taxon>
        <taxon>Pseudomonadati</taxon>
        <taxon>Pseudomonadota</taxon>
        <taxon>Gammaproteobacteria</taxon>
        <taxon>Enterobacterales</taxon>
        <taxon>Enterobacteriaceae</taxon>
        <taxon>Escherichia</taxon>
    </lineage>
</organism>
<gene>
    <name type="primary">fanE</name>
</gene>
<feature type="signal peptide" evidence="1">
    <location>
        <begin position="1"/>
        <end position="19"/>
    </location>
</feature>
<feature type="chain" id="PRO_0000009271" description="Chaperone protein FanE">
    <location>
        <begin position="20"/>
        <end position="228"/>
    </location>
</feature>
<feature type="disulfide bond" evidence="1">
    <location>
        <begin position="157"/>
        <end position="198"/>
    </location>
</feature>
<accession>P25402</accession>
<reference key="1">
    <citation type="journal article" date="1991" name="Mol. Microbiol.">
        <title>Structure and function of periplasmic chaperone-like proteins involved in the biosynthesis of K88 and K99 fimbriae in enterotoxigenic Escherichia coli.</title>
        <authorList>
            <person name="Bakker D."/>
            <person name="Vader C.E.M."/>
            <person name="Roosendaal B."/>
            <person name="Mooi F.R."/>
            <person name="Oudega B."/>
            <person name="de Graaf F.K."/>
        </authorList>
    </citation>
    <scope>NUCLEOTIDE SEQUENCE [GENOMIC DNA]</scope>
    <source>
        <strain>Isolate B41</strain>
    </source>
</reference>
<reference key="2">
    <citation type="journal article" date="1993" name="Jpn. J. Vet. Res.">
        <title>Confirmed nucleotide sequence of fanF of Escherichia coli K99 fimbriae.</title>
        <authorList>
            <person name="Abe N."/>
            <person name="Moriishi K."/>
            <person name="Saito M."/>
            <person name="Naiki M."/>
        </authorList>
    </citation>
    <scope>NUCLEOTIDE SEQUENCE [GENOMIC DNA] OF 204-228</scope>
</reference>
<reference key="3">
    <citation type="journal article" date="1990" name="Mol. Microbiol.">
        <title>Structure, localization and function of FanF, a minor component of K99 fibrillae of enterotoxigenic Escherichia coli.</title>
        <authorList>
            <person name="Simons B.L."/>
            <person name="Willemsen P.T.J."/>
            <person name="Bakker D."/>
            <person name="Roosendaal B."/>
            <person name="de Graaf F.K."/>
            <person name="Oudega B."/>
        </authorList>
    </citation>
    <scope>NUCLEOTIDE SEQUENCE [GENOMIC DNA] OF 207-228</scope>
    <source>
        <strain>Isolate B41</strain>
    </source>
</reference>
<name>FANE_ECOLX</name>
<proteinExistence type="inferred from homology"/>
<dbReference type="EMBL" id="X56001">
    <property type="protein sequence ID" value="CAA39474.1"/>
    <property type="molecule type" value="Genomic_DNA"/>
</dbReference>
<dbReference type="EMBL" id="S70131">
    <property type="protein sequence ID" value="AAB30305.1"/>
    <property type="molecule type" value="Genomic_DNA"/>
</dbReference>
<dbReference type="PIR" id="S12391">
    <property type="entry name" value="S12391"/>
</dbReference>
<dbReference type="RefSeq" id="WP_001031857.1">
    <property type="nucleotide sequence ID" value="NZ_PUQR01000054.1"/>
</dbReference>
<dbReference type="SMR" id="P25402"/>
<dbReference type="GO" id="GO:0030288">
    <property type="term" value="C:outer membrane-bounded periplasmic space"/>
    <property type="evidence" value="ECO:0007669"/>
    <property type="project" value="InterPro"/>
</dbReference>
<dbReference type="GO" id="GO:0071555">
    <property type="term" value="P:cell wall organization"/>
    <property type="evidence" value="ECO:0007669"/>
    <property type="project" value="InterPro"/>
</dbReference>
<dbReference type="GO" id="GO:0061077">
    <property type="term" value="P:chaperone-mediated protein folding"/>
    <property type="evidence" value="ECO:0007669"/>
    <property type="project" value="InterPro"/>
</dbReference>
<dbReference type="Gene3D" id="2.60.40.10">
    <property type="entry name" value="Immunoglobulins"/>
    <property type="match status" value="2"/>
</dbReference>
<dbReference type="InterPro" id="IPR013783">
    <property type="entry name" value="Ig-like_fold"/>
</dbReference>
<dbReference type="InterPro" id="IPR008962">
    <property type="entry name" value="PapD-like_sf"/>
</dbReference>
<dbReference type="InterPro" id="IPR050643">
    <property type="entry name" value="Periplasmic_pilus_chap"/>
</dbReference>
<dbReference type="InterPro" id="IPR036316">
    <property type="entry name" value="Pili_assmbl_chap_C_dom_sf"/>
</dbReference>
<dbReference type="InterPro" id="IPR001829">
    <property type="entry name" value="Pili_assmbl_chaperone_bac"/>
</dbReference>
<dbReference type="InterPro" id="IPR016148">
    <property type="entry name" value="Pili_assmbl_chaperone_C"/>
</dbReference>
<dbReference type="InterPro" id="IPR018046">
    <property type="entry name" value="Pili_assmbl_chaperone_CS"/>
</dbReference>
<dbReference type="InterPro" id="IPR016147">
    <property type="entry name" value="Pili_assmbl_chaperone_N"/>
</dbReference>
<dbReference type="NCBIfam" id="NF011758">
    <property type="entry name" value="PRK15211.1"/>
    <property type="match status" value="1"/>
</dbReference>
<dbReference type="PANTHER" id="PTHR30251:SF2">
    <property type="entry name" value="FIMBRIAL CHAPERONE YADV-RELATED"/>
    <property type="match status" value="1"/>
</dbReference>
<dbReference type="PANTHER" id="PTHR30251">
    <property type="entry name" value="PILUS ASSEMBLY CHAPERONE"/>
    <property type="match status" value="1"/>
</dbReference>
<dbReference type="Pfam" id="PF02753">
    <property type="entry name" value="PapD_C"/>
    <property type="match status" value="1"/>
</dbReference>
<dbReference type="Pfam" id="PF00345">
    <property type="entry name" value="PapD_N"/>
    <property type="match status" value="1"/>
</dbReference>
<dbReference type="PRINTS" id="PR00969">
    <property type="entry name" value="CHAPERONPILI"/>
</dbReference>
<dbReference type="SUPFAM" id="SSF49354">
    <property type="entry name" value="PapD-like"/>
    <property type="match status" value="1"/>
</dbReference>
<dbReference type="SUPFAM" id="SSF49584">
    <property type="entry name" value="Periplasmic chaperone C-domain"/>
    <property type="match status" value="1"/>
</dbReference>
<dbReference type="PROSITE" id="PS00635">
    <property type="entry name" value="PILI_CHAPERONE"/>
    <property type="match status" value="1"/>
</dbReference>
<keyword id="KW-0143">Chaperone</keyword>
<keyword id="KW-1015">Disulfide bond</keyword>
<keyword id="KW-1029">Fimbrium biogenesis</keyword>
<keyword id="KW-0393">Immunoglobulin domain</keyword>
<keyword id="KW-0574">Periplasm</keyword>
<keyword id="KW-0614">Plasmid</keyword>
<keyword id="KW-0732">Signal</keyword>
<geneLocation type="plasmid">
    <name>pFK99</name>
</geneLocation>